<dbReference type="EC" id="4.2.1.11" evidence="1"/>
<dbReference type="EMBL" id="AP010904">
    <property type="protein sequence ID" value="BAH74657.1"/>
    <property type="molecule type" value="Genomic_DNA"/>
</dbReference>
<dbReference type="RefSeq" id="WP_015859881.1">
    <property type="nucleotide sequence ID" value="NC_012796.1"/>
</dbReference>
<dbReference type="SMR" id="C4XLR9"/>
<dbReference type="STRING" id="573370.DMR_11660"/>
<dbReference type="KEGG" id="dma:DMR_11660"/>
<dbReference type="eggNOG" id="COG0148">
    <property type="taxonomic scope" value="Bacteria"/>
</dbReference>
<dbReference type="HOGENOM" id="CLU_031223_2_1_7"/>
<dbReference type="OrthoDB" id="9804716at2"/>
<dbReference type="UniPathway" id="UPA00109">
    <property type="reaction ID" value="UER00187"/>
</dbReference>
<dbReference type="Proteomes" id="UP000009071">
    <property type="component" value="Chromosome"/>
</dbReference>
<dbReference type="GO" id="GO:0009986">
    <property type="term" value="C:cell surface"/>
    <property type="evidence" value="ECO:0007669"/>
    <property type="project" value="UniProtKB-SubCell"/>
</dbReference>
<dbReference type="GO" id="GO:0005576">
    <property type="term" value="C:extracellular region"/>
    <property type="evidence" value="ECO:0007669"/>
    <property type="project" value="UniProtKB-SubCell"/>
</dbReference>
<dbReference type="GO" id="GO:0000015">
    <property type="term" value="C:phosphopyruvate hydratase complex"/>
    <property type="evidence" value="ECO:0007669"/>
    <property type="project" value="InterPro"/>
</dbReference>
<dbReference type="GO" id="GO:0000287">
    <property type="term" value="F:magnesium ion binding"/>
    <property type="evidence" value="ECO:0007669"/>
    <property type="project" value="UniProtKB-UniRule"/>
</dbReference>
<dbReference type="GO" id="GO:0004634">
    <property type="term" value="F:phosphopyruvate hydratase activity"/>
    <property type="evidence" value="ECO:0007669"/>
    <property type="project" value="UniProtKB-UniRule"/>
</dbReference>
<dbReference type="GO" id="GO:0006096">
    <property type="term" value="P:glycolytic process"/>
    <property type="evidence" value="ECO:0007669"/>
    <property type="project" value="UniProtKB-UniRule"/>
</dbReference>
<dbReference type="CDD" id="cd03313">
    <property type="entry name" value="enolase"/>
    <property type="match status" value="1"/>
</dbReference>
<dbReference type="FunFam" id="3.20.20.120:FF:000001">
    <property type="entry name" value="Enolase"/>
    <property type="match status" value="1"/>
</dbReference>
<dbReference type="FunFam" id="3.30.390.10:FF:000001">
    <property type="entry name" value="Enolase"/>
    <property type="match status" value="1"/>
</dbReference>
<dbReference type="Gene3D" id="3.20.20.120">
    <property type="entry name" value="Enolase-like C-terminal domain"/>
    <property type="match status" value="1"/>
</dbReference>
<dbReference type="Gene3D" id="3.30.390.10">
    <property type="entry name" value="Enolase-like, N-terminal domain"/>
    <property type="match status" value="1"/>
</dbReference>
<dbReference type="HAMAP" id="MF_00318">
    <property type="entry name" value="Enolase"/>
    <property type="match status" value="1"/>
</dbReference>
<dbReference type="InterPro" id="IPR000941">
    <property type="entry name" value="Enolase"/>
</dbReference>
<dbReference type="InterPro" id="IPR036849">
    <property type="entry name" value="Enolase-like_C_sf"/>
</dbReference>
<dbReference type="InterPro" id="IPR029017">
    <property type="entry name" value="Enolase-like_N"/>
</dbReference>
<dbReference type="InterPro" id="IPR020810">
    <property type="entry name" value="Enolase_C"/>
</dbReference>
<dbReference type="InterPro" id="IPR020809">
    <property type="entry name" value="Enolase_CS"/>
</dbReference>
<dbReference type="InterPro" id="IPR020811">
    <property type="entry name" value="Enolase_N"/>
</dbReference>
<dbReference type="NCBIfam" id="TIGR01060">
    <property type="entry name" value="eno"/>
    <property type="match status" value="1"/>
</dbReference>
<dbReference type="PANTHER" id="PTHR11902">
    <property type="entry name" value="ENOLASE"/>
    <property type="match status" value="1"/>
</dbReference>
<dbReference type="PANTHER" id="PTHR11902:SF1">
    <property type="entry name" value="ENOLASE"/>
    <property type="match status" value="1"/>
</dbReference>
<dbReference type="Pfam" id="PF00113">
    <property type="entry name" value="Enolase_C"/>
    <property type="match status" value="1"/>
</dbReference>
<dbReference type="Pfam" id="PF03952">
    <property type="entry name" value="Enolase_N"/>
    <property type="match status" value="1"/>
</dbReference>
<dbReference type="PIRSF" id="PIRSF001400">
    <property type="entry name" value="Enolase"/>
    <property type="match status" value="1"/>
</dbReference>
<dbReference type="PRINTS" id="PR00148">
    <property type="entry name" value="ENOLASE"/>
</dbReference>
<dbReference type="SFLD" id="SFLDF00002">
    <property type="entry name" value="enolase"/>
    <property type="match status" value="1"/>
</dbReference>
<dbReference type="SFLD" id="SFLDG00178">
    <property type="entry name" value="enolase"/>
    <property type="match status" value="1"/>
</dbReference>
<dbReference type="SMART" id="SM01192">
    <property type="entry name" value="Enolase_C"/>
    <property type="match status" value="1"/>
</dbReference>
<dbReference type="SMART" id="SM01193">
    <property type="entry name" value="Enolase_N"/>
    <property type="match status" value="1"/>
</dbReference>
<dbReference type="SUPFAM" id="SSF51604">
    <property type="entry name" value="Enolase C-terminal domain-like"/>
    <property type="match status" value="1"/>
</dbReference>
<dbReference type="SUPFAM" id="SSF54826">
    <property type="entry name" value="Enolase N-terminal domain-like"/>
    <property type="match status" value="1"/>
</dbReference>
<dbReference type="PROSITE" id="PS00164">
    <property type="entry name" value="ENOLASE"/>
    <property type="match status" value="1"/>
</dbReference>
<accession>C4XLR9</accession>
<organism>
    <name type="scientific">Solidesulfovibrio magneticus (strain ATCC 700980 / DSM 13731 / RS-1)</name>
    <name type="common">Desulfovibrio magneticus</name>
    <dbReference type="NCBI Taxonomy" id="573370"/>
    <lineage>
        <taxon>Bacteria</taxon>
        <taxon>Pseudomonadati</taxon>
        <taxon>Thermodesulfobacteriota</taxon>
        <taxon>Desulfovibrionia</taxon>
        <taxon>Desulfovibrionales</taxon>
        <taxon>Desulfovibrionaceae</taxon>
        <taxon>Solidesulfovibrio</taxon>
    </lineage>
</organism>
<reference key="1">
    <citation type="journal article" date="2009" name="Genome Res.">
        <title>Whole genome sequence of Desulfovibrio magneticus strain RS-1 revealed common gene clusters in magnetotactic bacteria.</title>
        <authorList>
            <person name="Nakazawa H."/>
            <person name="Arakaki A."/>
            <person name="Narita-Yamada S."/>
            <person name="Yashiro I."/>
            <person name="Jinno K."/>
            <person name="Aoki N."/>
            <person name="Tsuruyama A."/>
            <person name="Okamura Y."/>
            <person name="Tanikawa S."/>
            <person name="Fujita N."/>
            <person name="Takeyama H."/>
            <person name="Matsunaga T."/>
        </authorList>
    </citation>
    <scope>NUCLEOTIDE SEQUENCE [LARGE SCALE GENOMIC DNA]</scope>
    <source>
        <strain>ATCC 700980 / DSM 13731 / RS-1</strain>
    </source>
</reference>
<comment type="function">
    <text evidence="1">Catalyzes the reversible conversion of 2-phosphoglycerate (2-PG) into phosphoenolpyruvate (PEP). It is essential for the degradation of carbohydrates via glycolysis.</text>
</comment>
<comment type="catalytic activity">
    <reaction evidence="1">
        <text>(2R)-2-phosphoglycerate = phosphoenolpyruvate + H2O</text>
        <dbReference type="Rhea" id="RHEA:10164"/>
        <dbReference type="ChEBI" id="CHEBI:15377"/>
        <dbReference type="ChEBI" id="CHEBI:58289"/>
        <dbReference type="ChEBI" id="CHEBI:58702"/>
        <dbReference type="EC" id="4.2.1.11"/>
    </reaction>
</comment>
<comment type="cofactor">
    <cofactor evidence="1">
        <name>Mg(2+)</name>
        <dbReference type="ChEBI" id="CHEBI:18420"/>
    </cofactor>
    <text evidence="1">Binds a second Mg(2+) ion via substrate during catalysis.</text>
</comment>
<comment type="pathway">
    <text evidence="1">Carbohydrate degradation; glycolysis; pyruvate from D-glyceraldehyde 3-phosphate: step 4/5.</text>
</comment>
<comment type="subcellular location">
    <subcellularLocation>
        <location evidence="1">Cytoplasm</location>
    </subcellularLocation>
    <subcellularLocation>
        <location evidence="1">Secreted</location>
    </subcellularLocation>
    <subcellularLocation>
        <location evidence="1">Cell surface</location>
    </subcellularLocation>
    <text evidence="1">Fractions of enolase are present in both the cytoplasm and on the cell surface.</text>
</comment>
<comment type="similarity">
    <text evidence="1">Belongs to the enolase family.</text>
</comment>
<name>ENO_SOLM1</name>
<feature type="chain" id="PRO_1000205090" description="Enolase">
    <location>
        <begin position="1"/>
        <end position="436"/>
    </location>
</feature>
<feature type="active site" description="Proton donor" evidence="1">
    <location>
        <position position="205"/>
    </location>
</feature>
<feature type="active site" description="Proton acceptor" evidence="1">
    <location>
        <position position="337"/>
    </location>
</feature>
<feature type="binding site" evidence="1">
    <location>
        <position position="163"/>
    </location>
    <ligand>
        <name>(2R)-2-phosphoglycerate</name>
        <dbReference type="ChEBI" id="CHEBI:58289"/>
    </ligand>
</feature>
<feature type="binding site" evidence="1">
    <location>
        <position position="242"/>
    </location>
    <ligand>
        <name>Mg(2+)</name>
        <dbReference type="ChEBI" id="CHEBI:18420"/>
    </ligand>
</feature>
<feature type="binding site" evidence="1">
    <location>
        <position position="285"/>
    </location>
    <ligand>
        <name>Mg(2+)</name>
        <dbReference type="ChEBI" id="CHEBI:18420"/>
    </ligand>
</feature>
<feature type="binding site" evidence="1">
    <location>
        <position position="312"/>
    </location>
    <ligand>
        <name>Mg(2+)</name>
        <dbReference type="ChEBI" id="CHEBI:18420"/>
    </ligand>
</feature>
<feature type="binding site" evidence="1">
    <location>
        <position position="337"/>
    </location>
    <ligand>
        <name>(2R)-2-phosphoglycerate</name>
        <dbReference type="ChEBI" id="CHEBI:58289"/>
    </ligand>
</feature>
<feature type="binding site" evidence="1">
    <location>
        <position position="366"/>
    </location>
    <ligand>
        <name>(2R)-2-phosphoglycerate</name>
        <dbReference type="ChEBI" id="CHEBI:58289"/>
    </ligand>
</feature>
<feature type="binding site" evidence="1">
    <location>
        <position position="367"/>
    </location>
    <ligand>
        <name>(2R)-2-phosphoglycerate</name>
        <dbReference type="ChEBI" id="CHEBI:58289"/>
    </ligand>
</feature>
<feature type="binding site" evidence="1">
    <location>
        <position position="388"/>
    </location>
    <ligand>
        <name>(2R)-2-phosphoglycerate</name>
        <dbReference type="ChEBI" id="CHEBI:58289"/>
    </ligand>
</feature>
<keyword id="KW-0963">Cytoplasm</keyword>
<keyword id="KW-0324">Glycolysis</keyword>
<keyword id="KW-0456">Lyase</keyword>
<keyword id="KW-0460">Magnesium</keyword>
<keyword id="KW-0479">Metal-binding</keyword>
<keyword id="KW-0964">Secreted</keyword>
<gene>
    <name evidence="1" type="primary">eno</name>
    <name type="ordered locus">DMR_11660</name>
</gene>
<evidence type="ECO:0000255" key="1">
    <source>
        <dbReference type="HAMAP-Rule" id="MF_00318"/>
    </source>
</evidence>
<sequence length="436" mass="46871">MSTIAAVWAREILDSRGNPTVEVEVTLESGASGRAAVPSGASTGSREALEMRDQDASRYAGKGVTKAVENVQGELADTVIGMDALQQVAIDNLMIDTDGTENKSRLGANAILGVSLAVCRAASNFLGLPLYQYIGGINSKVLPVPMMNIINGGAHAPNNLDIQEFMIIPLGARTFADALRMGAETFHTLKKILAADGHMTAVGDEGGFAPNLKSHDEAFKYIIKAIEESGYRPGSEISLAIDAAASEFYKNGKYVLTGENLSLSSTEMVDYLGGFVERYPLISIEDGLAESDWPGWKTLTLNLGERIQLVGDDIFVTNPDILAEGIDQGVANSILIKLNQIGTVTETLDTIEMAKQAAYTTVVSHRSGETEDSFIADLSVAVNAGQIKTGSLCRSDRLAKYNQLLRIEEELEDMAIYYGPVMAGQWYEEEPEGDEE</sequence>
<proteinExistence type="inferred from homology"/>
<protein>
    <recommendedName>
        <fullName evidence="1">Enolase</fullName>
        <ecNumber evidence="1">4.2.1.11</ecNumber>
    </recommendedName>
    <alternativeName>
        <fullName evidence="1">2-phospho-D-glycerate hydro-lyase</fullName>
    </alternativeName>
    <alternativeName>
        <fullName evidence="1">2-phosphoglycerate dehydratase</fullName>
    </alternativeName>
</protein>